<protein>
    <recommendedName>
        <fullName evidence="2">Propane 2-monooxygenase, effector component</fullName>
        <shortName evidence="2">PrMO</shortName>
    </recommendedName>
    <alternativeName>
        <fullName evidence="2">Propane 2-monooxygenase, coupling protein component</fullName>
    </alternativeName>
</protein>
<accession>Q0SJK6</accession>
<feature type="chain" id="PRO_0000442967" description="Propane 2-monooxygenase, effector component">
    <location>
        <begin position="1"/>
        <end position="113"/>
    </location>
</feature>
<proteinExistence type="evidence at protein level"/>
<evidence type="ECO:0000269" key="1">
    <source>
    </source>
</evidence>
<evidence type="ECO:0000303" key="2">
    <source>
    </source>
</evidence>
<evidence type="ECO:0000305" key="3"/>
<evidence type="ECO:0000305" key="4">
    <source>
    </source>
</evidence>
<evidence type="ECO:0000312" key="5">
    <source>
        <dbReference type="EMBL" id="ABG92280.1"/>
    </source>
</evidence>
<evidence type="ECO:0000312" key="6">
    <source>
        <dbReference type="Proteomes" id="UP000008710"/>
    </source>
</evidence>
<comment type="function">
    <text evidence="1">Effector component of the propane 2-monooxygenase multicomponent enzyme system which is involved in the degradation of propane via the O2-dependent hydroxylation of propane.</text>
</comment>
<comment type="subunit">
    <text evidence="4">The propane 2-monooxygenase multicomponent enzyme system is composed of an electron transfer component and a monooxygenase component interacting with the effector protein PrmD. The electron transfer component is composed of a reductase (PrmB), and the monooxygenase component is formed by a large subunit (PrmA) and a small subunit (PrmC).</text>
</comment>
<comment type="induction">
    <text evidence="1">By propane.</text>
</comment>
<comment type="similarity">
    <text evidence="3">Belongs to the TmoD/XamoD family.</text>
</comment>
<dbReference type="EMBL" id="CP000431">
    <property type="protein sequence ID" value="ABG92280.1"/>
    <property type="molecule type" value="Genomic_DNA"/>
</dbReference>
<dbReference type="RefSeq" id="WP_005242368.1">
    <property type="nucleotide sequence ID" value="NC_008268.1"/>
</dbReference>
<dbReference type="SMR" id="Q0SJK6"/>
<dbReference type="GeneID" id="69892170"/>
<dbReference type="KEGG" id="rha:RHA1_ro00444"/>
<dbReference type="PATRIC" id="fig|101510.16.peg.472"/>
<dbReference type="eggNOG" id="ENOG5032SNE">
    <property type="taxonomic scope" value="Bacteria"/>
</dbReference>
<dbReference type="HOGENOM" id="CLU_2068611_0_0_11"/>
<dbReference type="Proteomes" id="UP000008710">
    <property type="component" value="Chromosome"/>
</dbReference>
<dbReference type="GO" id="GO:0004497">
    <property type="term" value="F:monooxygenase activity"/>
    <property type="evidence" value="ECO:0007669"/>
    <property type="project" value="InterPro"/>
</dbReference>
<dbReference type="Gene3D" id="3.90.56.10">
    <property type="entry name" value="Monooxygenase component MmoB/DmpM"/>
    <property type="match status" value="1"/>
</dbReference>
<dbReference type="InterPro" id="IPR003454">
    <property type="entry name" value="MOase_MmoB_DmpM"/>
</dbReference>
<dbReference type="InterPro" id="IPR036889">
    <property type="entry name" value="mOase_MmoB_DmpM_sf"/>
</dbReference>
<dbReference type="NCBIfam" id="NF045941">
    <property type="entry name" value="PropMonoxMimD"/>
    <property type="match status" value="1"/>
</dbReference>
<dbReference type="Pfam" id="PF02406">
    <property type="entry name" value="MmoB_DmpM"/>
    <property type="match status" value="1"/>
</dbReference>
<dbReference type="SUPFAM" id="SSF56029">
    <property type="entry name" value="Monooxygenase (hydroxylase) regulatory protein"/>
    <property type="match status" value="1"/>
</dbReference>
<sequence length="113" mass="12547">MSMQFGSSTEFSNMCGVTLMNTPIGRVVAEVMGAKDGVELTEYPSMIRVDGQRLLDFDYEELTDALGQEFDGSIFEEISSTHYGRMVHLDEKTLLFASPEDAAEYIGFDLTAQ</sequence>
<reference key="1">
    <citation type="journal article" date="2006" name="Proc. Natl. Acad. Sci. U.S.A.">
        <title>The complete genome of Rhodococcus sp. RHA1 provides insights into a catabolic powerhouse.</title>
        <authorList>
            <person name="McLeod M.P."/>
            <person name="Warren R.L."/>
            <person name="Hsiao W.W.L."/>
            <person name="Araki N."/>
            <person name="Myhre M."/>
            <person name="Fernandes C."/>
            <person name="Miyazawa D."/>
            <person name="Wong W."/>
            <person name="Lillquist A.L."/>
            <person name="Wang D."/>
            <person name="Dosanjh M."/>
            <person name="Hara H."/>
            <person name="Petrescu A."/>
            <person name="Morin R.D."/>
            <person name="Yang G."/>
            <person name="Stott J.M."/>
            <person name="Schein J.E."/>
            <person name="Shin H."/>
            <person name="Smailus D."/>
            <person name="Siddiqui A.S."/>
            <person name="Marra M.A."/>
            <person name="Jones S.J.M."/>
            <person name="Holt R."/>
            <person name="Brinkman F.S.L."/>
            <person name="Miyauchi K."/>
            <person name="Fukuda M."/>
            <person name="Davies J.E."/>
            <person name="Mohn W.W."/>
            <person name="Eltis L.D."/>
        </authorList>
    </citation>
    <scope>NUCLEOTIDE SEQUENCE [LARGE SCALE GENOMIC DNA]</scope>
    <source>
        <strain evidence="6">RHA1</strain>
    </source>
</reference>
<reference key="2">
    <citation type="journal article" date="2007" name="Appl. Environ. Microbiol.">
        <title>An inducible propane monooxygenase is responsible for N-nitrosodimethylamine degradation by Rhodococcus sp. strain RHA1.</title>
        <authorList>
            <person name="Sharp J.O."/>
            <person name="Sales C.M."/>
            <person name="LeBlanc J.C."/>
            <person name="Liu J."/>
            <person name="Wood T.K."/>
            <person name="Eltis L.D."/>
            <person name="Mohn W.W."/>
            <person name="Alvarez-Cohen L."/>
        </authorList>
    </citation>
    <scope>FUNCTION</scope>
    <scope>INDUCTION BY PROPANE</scope>
    <scope>SUBUNIT</scope>
    <source>
        <strain>RHA1</strain>
    </source>
</reference>
<gene>
    <name evidence="2" type="primary">prmD</name>
    <name evidence="5" type="ordered locus">RHA1_ro00444</name>
</gene>
<name>PRMD_RHOJR</name>
<organism>
    <name type="scientific">Rhodococcus jostii (strain RHA1)</name>
    <dbReference type="NCBI Taxonomy" id="101510"/>
    <lineage>
        <taxon>Bacteria</taxon>
        <taxon>Bacillati</taxon>
        <taxon>Actinomycetota</taxon>
        <taxon>Actinomycetes</taxon>
        <taxon>Mycobacteriales</taxon>
        <taxon>Nocardiaceae</taxon>
        <taxon>Rhodococcus</taxon>
    </lineage>
</organism>